<keyword id="KW-0378">Hydrolase</keyword>
<feature type="chain" id="PRO_0000326741" description="Acylphosphatase">
    <location>
        <begin position="1"/>
        <end position="93"/>
    </location>
</feature>
<feature type="domain" description="Acylphosphatase-like" evidence="1">
    <location>
        <begin position="5"/>
        <end position="93"/>
    </location>
</feature>
<feature type="active site" evidence="1">
    <location>
        <position position="20"/>
    </location>
</feature>
<feature type="active site" evidence="1">
    <location>
        <position position="38"/>
    </location>
</feature>
<accession>Q71ZT9</accession>
<proteinExistence type="inferred from homology"/>
<sequence length="93" mass="10466">MARDTAILRVTGFVQGVGFRYTTKHVAYKYDISGTVKNLDDGSVEIHAIAEEENLNKFIDAIKKGPSPGCRIEHVYIYKGAPVEERKTFDIVY</sequence>
<dbReference type="EC" id="3.6.1.7"/>
<dbReference type="EMBL" id="AE017262">
    <property type="protein sequence ID" value="AAT04175.1"/>
    <property type="molecule type" value="Genomic_DNA"/>
</dbReference>
<dbReference type="RefSeq" id="WP_003722507.1">
    <property type="nucleotide sequence ID" value="NC_002973.6"/>
</dbReference>
<dbReference type="SMR" id="Q71ZT9"/>
<dbReference type="KEGG" id="lmf:LMOf2365_1400"/>
<dbReference type="HOGENOM" id="CLU_141932_1_2_9"/>
<dbReference type="GO" id="GO:0003998">
    <property type="term" value="F:acylphosphatase activity"/>
    <property type="evidence" value="ECO:0007669"/>
    <property type="project" value="UniProtKB-EC"/>
</dbReference>
<dbReference type="Gene3D" id="3.30.70.100">
    <property type="match status" value="1"/>
</dbReference>
<dbReference type="InterPro" id="IPR020456">
    <property type="entry name" value="Acylphosphatase"/>
</dbReference>
<dbReference type="InterPro" id="IPR001792">
    <property type="entry name" value="Acylphosphatase-like_dom"/>
</dbReference>
<dbReference type="InterPro" id="IPR036046">
    <property type="entry name" value="Acylphosphatase-like_dom_sf"/>
</dbReference>
<dbReference type="InterPro" id="IPR017968">
    <property type="entry name" value="Acylphosphatase_CS"/>
</dbReference>
<dbReference type="NCBIfam" id="NF011015">
    <property type="entry name" value="PRK14443.1"/>
    <property type="match status" value="1"/>
</dbReference>
<dbReference type="PANTHER" id="PTHR47268">
    <property type="entry name" value="ACYLPHOSPHATASE"/>
    <property type="match status" value="1"/>
</dbReference>
<dbReference type="PANTHER" id="PTHR47268:SF4">
    <property type="entry name" value="ACYLPHOSPHATASE"/>
    <property type="match status" value="1"/>
</dbReference>
<dbReference type="Pfam" id="PF00708">
    <property type="entry name" value="Acylphosphatase"/>
    <property type="match status" value="1"/>
</dbReference>
<dbReference type="SUPFAM" id="SSF54975">
    <property type="entry name" value="Acylphosphatase/BLUF domain-like"/>
    <property type="match status" value="1"/>
</dbReference>
<dbReference type="PROSITE" id="PS00150">
    <property type="entry name" value="ACYLPHOSPHATASE_1"/>
    <property type="match status" value="1"/>
</dbReference>
<dbReference type="PROSITE" id="PS51160">
    <property type="entry name" value="ACYLPHOSPHATASE_3"/>
    <property type="match status" value="1"/>
</dbReference>
<name>ACYP_LISMF</name>
<gene>
    <name type="primary">acyP</name>
    <name type="ordered locus">LMOf2365_1400</name>
</gene>
<reference key="1">
    <citation type="journal article" date="2004" name="Nucleic Acids Res.">
        <title>Whole genome comparisons of serotype 4b and 1/2a strains of the food-borne pathogen Listeria monocytogenes reveal new insights into the core genome components of this species.</title>
        <authorList>
            <person name="Nelson K.E."/>
            <person name="Fouts D.E."/>
            <person name="Mongodin E.F."/>
            <person name="Ravel J."/>
            <person name="DeBoy R.T."/>
            <person name="Kolonay J.F."/>
            <person name="Rasko D.A."/>
            <person name="Angiuoli S.V."/>
            <person name="Gill S.R."/>
            <person name="Paulsen I.T."/>
            <person name="Peterson J.D."/>
            <person name="White O."/>
            <person name="Nelson W.C."/>
            <person name="Nierman W.C."/>
            <person name="Beanan M.J."/>
            <person name="Brinkac L.M."/>
            <person name="Daugherty S.C."/>
            <person name="Dodson R.J."/>
            <person name="Durkin A.S."/>
            <person name="Madupu R."/>
            <person name="Haft D.H."/>
            <person name="Selengut J."/>
            <person name="Van Aken S.E."/>
            <person name="Khouri H.M."/>
            <person name="Fedorova N."/>
            <person name="Forberger H.A."/>
            <person name="Tran B."/>
            <person name="Kathariou S."/>
            <person name="Wonderling L.D."/>
            <person name="Uhlich G.A."/>
            <person name="Bayles D.O."/>
            <person name="Luchansky J.B."/>
            <person name="Fraser C.M."/>
        </authorList>
    </citation>
    <scope>NUCLEOTIDE SEQUENCE [LARGE SCALE GENOMIC DNA]</scope>
    <source>
        <strain>F2365</strain>
    </source>
</reference>
<protein>
    <recommendedName>
        <fullName>Acylphosphatase</fullName>
        <ecNumber>3.6.1.7</ecNumber>
    </recommendedName>
    <alternativeName>
        <fullName>Acylphosphate phosphohydrolase</fullName>
    </alternativeName>
</protein>
<comment type="catalytic activity">
    <reaction>
        <text>an acyl phosphate + H2O = a carboxylate + phosphate + H(+)</text>
        <dbReference type="Rhea" id="RHEA:14965"/>
        <dbReference type="ChEBI" id="CHEBI:15377"/>
        <dbReference type="ChEBI" id="CHEBI:15378"/>
        <dbReference type="ChEBI" id="CHEBI:29067"/>
        <dbReference type="ChEBI" id="CHEBI:43474"/>
        <dbReference type="ChEBI" id="CHEBI:59918"/>
        <dbReference type="EC" id="3.6.1.7"/>
    </reaction>
</comment>
<comment type="similarity">
    <text evidence="2">Belongs to the acylphosphatase family.</text>
</comment>
<organism>
    <name type="scientific">Listeria monocytogenes serotype 4b (strain F2365)</name>
    <dbReference type="NCBI Taxonomy" id="265669"/>
    <lineage>
        <taxon>Bacteria</taxon>
        <taxon>Bacillati</taxon>
        <taxon>Bacillota</taxon>
        <taxon>Bacilli</taxon>
        <taxon>Bacillales</taxon>
        <taxon>Listeriaceae</taxon>
        <taxon>Listeria</taxon>
    </lineage>
</organism>
<evidence type="ECO:0000255" key="1">
    <source>
        <dbReference type="PROSITE-ProRule" id="PRU00520"/>
    </source>
</evidence>
<evidence type="ECO:0000305" key="2"/>